<evidence type="ECO:0000255" key="1">
    <source>
        <dbReference type="HAMAP-Rule" id="MF_01187"/>
    </source>
</evidence>
<proteinExistence type="inferred from homology"/>
<accession>B6J1K1</accession>
<comment type="similarity">
    <text evidence="1">Belongs to the UPF0434 family.</text>
</comment>
<protein>
    <recommendedName>
        <fullName evidence="1">UPF0434 protein CbuG_1535</fullName>
    </recommendedName>
</protein>
<feature type="chain" id="PRO_1000138298" description="UPF0434 protein CbuG_1535">
    <location>
        <begin position="1"/>
        <end position="56"/>
    </location>
</feature>
<name>Y1535_COXB2</name>
<gene>
    <name type="ordered locus">CbuG_1535</name>
</gene>
<organism>
    <name type="scientific">Coxiella burnetii (strain CbuG_Q212)</name>
    <name type="common">Coxiella burnetii (strain Q212)</name>
    <dbReference type="NCBI Taxonomy" id="434923"/>
    <lineage>
        <taxon>Bacteria</taxon>
        <taxon>Pseudomonadati</taxon>
        <taxon>Pseudomonadota</taxon>
        <taxon>Gammaproteobacteria</taxon>
        <taxon>Legionellales</taxon>
        <taxon>Coxiellaceae</taxon>
        <taxon>Coxiella</taxon>
    </lineage>
</organism>
<reference key="1">
    <citation type="journal article" date="2009" name="Infect. Immun.">
        <title>Comparative genomics reveal extensive transposon-mediated genomic plasticity and diversity among potential effector proteins within the genus Coxiella.</title>
        <authorList>
            <person name="Beare P.A."/>
            <person name="Unsworth N."/>
            <person name="Andoh M."/>
            <person name="Voth D.E."/>
            <person name="Omsland A."/>
            <person name="Gilk S.D."/>
            <person name="Williams K.P."/>
            <person name="Sobral B.W."/>
            <person name="Kupko J.J. III"/>
            <person name="Porcella S.F."/>
            <person name="Samuel J.E."/>
            <person name="Heinzen R.A."/>
        </authorList>
    </citation>
    <scope>NUCLEOTIDE SEQUENCE [LARGE SCALE GENOMIC DNA]</scope>
    <source>
        <strain>CbuG_Q212</strain>
    </source>
</reference>
<sequence>MDRRLLEILACPICKGKLVYSQDEQELICRFDKLVYPIHDGIPVMLPDSTRPLIER</sequence>
<dbReference type="EMBL" id="CP001019">
    <property type="protein sequence ID" value="ACJ18829.1"/>
    <property type="molecule type" value="Genomic_DNA"/>
</dbReference>
<dbReference type="RefSeq" id="WP_010957603.1">
    <property type="nucleotide sequence ID" value="NC_011527.1"/>
</dbReference>
<dbReference type="SMR" id="B6J1K1"/>
<dbReference type="KEGG" id="cbg:CbuG_1535"/>
<dbReference type="HOGENOM" id="CLU_155659_3_1_6"/>
<dbReference type="GO" id="GO:0005829">
    <property type="term" value="C:cytosol"/>
    <property type="evidence" value="ECO:0007669"/>
    <property type="project" value="TreeGrafter"/>
</dbReference>
<dbReference type="FunFam" id="2.20.25.10:FF:000002">
    <property type="entry name" value="UPF0434 protein YcaR"/>
    <property type="match status" value="1"/>
</dbReference>
<dbReference type="Gene3D" id="2.20.25.10">
    <property type="match status" value="1"/>
</dbReference>
<dbReference type="HAMAP" id="MF_01187">
    <property type="entry name" value="UPF0434"/>
    <property type="match status" value="1"/>
</dbReference>
<dbReference type="InterPro" id="IPR005651">
    <property type="entry name" value="Trm112-like"/>
</dbReference>
<dbReference type="PANTHER" id="PTHR33505:SF4">
    <property type="entry name" value="PROTEIN PREY, MITOCHONDRIAL"/>
    <property type="match status" value="1"/>
</dbReference>
<dbReference type="PANTHER" id="PTHR33505">
    <property type="entry name" value="ZGC:162634"/>
    <property type="match status" value="1"/>
</dbReference>
<dbReference type="Pfam" id="PF03966">
    <property type="entry name" value="Trm112p"/>
    <property type="match status" value="1"/>
</dbReference>
<dbReference type="SUPFAM" id="SSF158997">
    <property type="entry name" value="Trm112p-like"/>
    <property type="match status" value="1"/>
</dbReference>